<feature type="chain" id="PRO_0000413936" description="Negative modulator of initiation of replication">
    <location>
        <begin position="1"/>
        <end position="253"/>
    </location>
</feature>
<feature type="region of interest" description="Disordered" evidence="2">
    <location>
        <begin position="66"/>
        <end position="112"/>
    </location>
</feature>
<feature type="region of interest" description="Interaction with DNA" evidence="1">
    <location>
        <begin position="154"/>
        <end position="155"/>
    </location>
</feature>
<gene>
    <name evidence="1" type="primary">seqA</name>
    <name type="ordered locus">Sden_1986</name>
</gene>
<organism>
    <name type="scientific">Shewanella denitrificans (strain OS217 / ATCC BAA-1090 / DSM 15013)</name>
    <dbReference type="NCBI Taxonomy" id="318161"/>
    <lineage>
        <taxon>Bacteria</taxon>
        <taxon>Pseudomonadati</taxon>
        <taxon>Pseudomonadota</taxon>
        <taxon>Gammaproteobacteria</taxon>
        <taxon>Alteromonadales</taxon>
        <taxon>Shewanellaceae</taxon>
        <taxon>Shewanella</taxon>
    </lineage>
</organism>
<dbReference type="EMBL" id="CP000302">
    <property type="protein sequence ID" value="ABE55269.1"/>
    <property type="molecule type" value="Genomic_DNA"/>
</dbReference>
<dbReference type="RefSeq" id="WP_011496425.1">
    <property type="nucleotide sequence ID" value="NC_007954.1"/>
</dbReference>
<dbReference type="SMR" id="Q12MQ7"/>
<dbReference type="STRING" id="318161.Sden_1986"/>
<dbReference type="KEGG" id="sdn:Sden_1986"/>
<dbReference type="eggNOG" id="COG3057">
    <property type="taxonomic scope" value="Bacteria"/>
</dbReference>
<dbReference type="HOGENOM" id="CLU_099733_0_0_6"/>
<dbReference type="OrthoDB" id="5591069at2"/>
<dbReference type="Proteomes" id="UP000001982">
    <property type="component" value="Chromosome"/>
</dbReference>
<dbReference type="GO" id="GO:0005737">
    <property type="term" value="C:cytoplasm"/>
    <property type="evidence" value="ECO:0007669"/>
    <property type="project" value="UniProtKB-SubCell"/>
</dbReference>
<dbReference type="GO" id="GO:0003677">
    <property type="term" value="F:DNA binding"/>
    <property type="evidence" value="ECO:0007669"/>
    <property type="project" value="UniProtKB-UniRule"/>
</dbReference>
<dbReference type="GO" id="GO:0032297">
    <property type="term" value="P:negative regulation of DNA-templated DNA replication initiation"/>
    <property type="evidence" value="ECO:0007669"/>
    <property type="project" value="UniProtKB-UniRule"/>
</dbReference>
<dbReference type="GO" id="GO:0006355">
    <property type="term" value="P:regulation of DNA-templated transcription"/>
    <property type="evidence" value="ECO:0007669"/>
    <property type="project" value="InterPro"/>
</dbReference>
<dbReference type="Gene3D" id="1.10.1220.10">
    <property type="entry name" value="Met repressor-like"/>
    <property type="match status" value="1"/>
</dbReference>
<dbReference type="Gene3D" id="1.20.1380.10">
    <property type="entry name" value="Replication modulator SeqA, C-terminal DNA-binding domain"/>
    <property type="match status" value="1"/>
</dbReference>
<dbReference type="HAMAP" id="MF_00908">
    <property type="entry name" value="SeqA"/>
    <property type="match status" value="1"/>
</dbReference>
<dbReference type="InterPro" id="IPR013321">
    <property type="entry name" value="Arc_rbn_hlx_hlx"/>
</dbReference>
<dbReference type="InterPro" id="IPR010985">
    <property type="entry name" value="Ribbon_hlx_hlx"/>
</dbReference>
<dbReference type="InterPro" id="IPR005621">
    <property type="entry name" value="SeqA"/>
</dbReference>
<dbReference type="InterPro" id="IPR026577">
    <property type="entry name" value="SeqA_DNA-bd_C"/>
</dbReference>
<dbReference type="InterPro" id="IPR036835">
    <property type="entry name" value="SeqA_DNA-bd_C_sf"/>
</dbReference>
<dbReference type="InterPro" id="IPR033761">
    <property type="entry name" value="SeqA_N"/>
</dbReference>
<dbReference type="NCBIfam" id="NF008389">
    <property type="entry name" value="PRK11187.1"/>
    <property type="match status" value="1"/>
</dbReference>
<dbReference type="Pfam" id="PF03925">
    <property type="entry name" value="SeqA"/>
    <property type="match status" value="1"/>
</dbReference>
<dbReference type="Pfam" id="PF17206">
    <property type="entry name" value="SeqA_N"/>
    <property type="match status" value="1"/>
</dbReference>
<dbReference type="SUPFAM" id="SSF82808">
    <property type="entry name" value="Replication modulator SeqA, C-terminal DNA-binding domain"/>
    <property type="match status" value="1"/>
</dbReference>
<dbReference type="SUPFAM" id="SSF47598">
    <property type="entry name" value="Ribbon-helix-helix"/>
    <property type="match status" value="1"/>
</dbReference>
<proteinExistence type="inferred from homology"/>
<keyword id="KW-0963">Cytoplasm</keyword>
<keyword id="KW-0236">DNA replication inhibitor</keyword>
<keyword id="KW-0238">DNA-binding</keyword>
<keyword id="KW-1185">Reference proteome</keyword>
<evidence type="ECO:0000255" key="1">
    <source>
        <dbReference type="HAMAP-Rule" id="MF_00908"/>
    </source>
</evidence>
<evidence type="ECO:0000256" key="2">
    <source>
        <dbReference type="SAM" id="MobiDB-lite"/>
    </source>
</evidence>
<comment type="function">
    <text evidence="1">Negative regulator of replication initiation, which contributes to regulation of DNA replication and ensures that replication initiation occurs exactly once per chromosome per cell cycle. Binds to pairs of hemimethylated GATC sequences in the oriC region, thus preventing assembly of replication proteins and re-initiation at newly replicated origins. Repression is relieved when the region becomes fully methylated.</text>
</comment>
<comment type="subunit">
    <text evidence="1">Homodimer. Polymerizes to form helical filaments.</text>
</comment>
<comment type="subcellular location">
    <subcellularLocation>
        <location evidence="1">Cytoplasm</location>
    </subcellularLocation>
</comment>
<comment type="similarity">
    <text evidence="1">Belongs to the SeqA family.</text>
</comment>
<sequence>MKYIEVDEELYRFIASKTERIGESASDILRRLLTLPVDTVTPFEPNAIDEPSLDVAHHQASNFAASNQEQQTGHGHAGEPSAVQTPESNDYAKAQPHSSGYQPGQLEGHKSEPQTLAQLNSQPLAVGQSSQSATSQVDFNALVNEHLLSQQKGAVGRFMWLLEGLAALAPSQFNKVLLVQGKGRLYFARSKDELLASSASANPKEIGTTGYWVTTNNNTAKKQAILVEVLTKLHCDETLASAIADRICDKVAG</sequence>
<protein>
    <recommendedName>
        <fullName evidence="1">Negative modulator of initiation of replication</fullName>
    </recommendedName>
</protein>
<accession>Q12MQ7</accession>
<name>SEQA_SHEDO</name>
<reference key="1">
    <citation type="submission" date="2006-03" db="EMBL/GenBank/DDBJ databases">
        <title>Complete sequence of Shewanella denitrificans OS217.</title>
        <authorList>
            <consortium name="US DOE Joint Genome Institute"/>
            <person name="Copeland A."/>
            <person name="Lucas S."/>
            <person name="Lapidus A."/>
            <person name="Barry K."/>
            <person name="Detter J.C."/>
            <person name="Glavina del Rio T."/>
            <person name="Hammon N."/>
            <person name="Israni S."/>
            <person name="Dalin E."/>
            <person name="Tice H."/>
            <person name="Pitluck S."/>
            <person name="Brettin T."/>
            <person name="Bruce D."/>
            <person name="Han C."/>
            <person name="Tapia R."/>
            <person name="Gilna P."/>
            <person name="Kiss H."/>
            <person name="Schmutz J."/>
            <person name="Larimer F."/>
            <person name="Land M."/>
            <person name="Hauser L."/>
            <person name="Kyrpides N."/>
            <person name="Lykidis A."/>
            <person name="Richardson P."/>
        </authorList>
    </citation>
    <scope>NUCLEOTIDE SEQUENCE [LARGE SCALE GENOMIC DNA]</scope>
    <source>
        <strain>OS217 / ATCC BAA-1090 / DSM 15013</strain>
    </source>
</reference>